<geneLocation type="plasmid">
    <name>PHS3</name>
</geneLocation>
<proteinExistence type="inferred from homology"/>
<dbReference type="EMBL" id="AM774418">
    <property type="protein sequence ID" value="CAP15443.1"/>
    <property type="molecule type" value="Genomic_DNA"/>
</dbReference>
<dbReference type="SMR" id="B0R9L6"/>
<dbReference type="EnsemblBacteria" id="CAP15443">
    <property type="protein sequence ID" value="CAP15443"/>
    <property type="gene ID" value="OE_5049F"/>
</dbReference>
<dbReference type="KEGG" id="hsl:OE_5049F"/>
<dbReference type="HOGENOM" id="CLU_409187_0_0_2"/>
<dbReference type="PhylomeDB" id="B0R9L6"/>
<dbReference type="Proteomes" id="UP000001321">
    <property type="component" value="Plasmid PHS3"/>
</dbReference>
<dbReference type="GO" id="GO:0005737">
    <property type="term" value="C:cytoplasm"/>
    <property type="evidence" value="ECO:0007669"/>
    <property type="project" value="UniProtKB-SubCell"/>
</dbReference>
<dbReference type="GO" id="GO:0016887">
    <property type="term" value="F:ATP hydrolysis activity"/>
    <property type="evidence" value="ECO:0007669"/>
    <property type="project" value="InterPro"/>
</dbReference>
<dbReference type="GO" id="GO:0006302">
    <property type="term" value="P:double-strand break repair"/>
    <property type="evidence" value="ECO:0007669"/>
    <property type="project" value="InterPro"/>
</dbReference>
<dbReference type="Gene3D" id="3.40.50.300">
    <property type="entry name" value="P-loop containing nucleotide triphosphate hydrolases"/>
    <property type="match status" value="2"/>
</dbReference>
<dbReference type="InterPro" id="IPR027417">
    <property type="entry name" value="P-loop_NTPase"/>
</dbReference>
<dbReference type="InterPro" id="IPR038729">
    <property type="entry name" value="Rad50/SbcC_AAA"/>
</dbReference>
<dbReference type="NCBIfam" id="NF045487">
    <property type="entry name" value="ASRP"/>
    <property type="match status" value="1"/>
</dbReference>
<dbReference type="PANTHER" id="PTHR32114">
    <property type="entry name" value="ABC TRANSPORTER ABCH.3"/>
    <property type="match status" value="1"/>
</dbReference>
<dbReference type="PANTHER" id="PTHR32114:SF2">
    <property type="entry name" value="ABC TRANSPORTER ABCH.3"/>
    <property type="match status" value="1"/>
</dbReference>
<dbReference type="Pfam" id="PF13476">
    <property type="entry name" value="AAA_23"/>
    <property type="match status" value="1"/>
</dbReference>
<dbReference type="SUPFAM" id="SSF52540">
    <property type="entry name" value="P-loop containing nucleoside triphosphate hydrolases"/>
    <property type="match status" value="1"/>
</dbReference>
<sequence length="667" mass="75727">METNAVSLIYRCRVGERMSQHDTDGRVSVYAENIGGISQCDVTFKPGVNVLRGRNATGRTSLLNGLAGVLGGTAPVLKGDEQEAEVRLEFNGTTYDQQYTRKNGTVQAAGQPVTERRDLVDLFVCLTAENPARRAIVQDGNLRDVIMRPVDTGSIQRRIEDLQSERNRIGQRIRAIEDDLDQRTSLTSRKTTLVSDLDECDQEIEELRNQLEQFDADPEEAEEIEQALTSLEERKQELESITNRIRTQEDTREALRDEQSELQTEREAIETSEEELKRIETRLSELTSRERSLATTINDLSAIVDFNEDLVSNADSDLLRSGDAAESPVSKLNPMSETVECWTCGTEVERNRIAGRLDDLRDLVDEKRTERSEVQTEIEELRESQQELQEVIHRRDEIGQRLSEISSEIAQRDQTLESLSEEREDVHQRLSELEEFVSEREALQESELTEQYQQLSELEYQRGQLEEELSAVREELAELDRLENERDQLQAQQDEIQAELVSQRTQIRDLEESAITAFNDHMEEILDVLRYKNIARVWIERKEGAEFNSSHGGYRGGSATKFELHVVRETDEGRGYEDTVQSLSESEREVVGLVVALAGYLVHDVYEVIPMMLLDSLEAIDADRIAALVDYFADYAPYLIVALLPEDADALGGDETSVVPASFASEE</sequence>
<name>SPH2_HALS3</name>
<evidence type="ECO:0000250" key="1"/>
<evidence type="ECO:0000255" key="2"/>
<evidence type="ECO:0000305" key="3"/>
<reference key="1">
    <citation type="journal article" date="2008" name="Genomics">
        <title>Evolution in the laboratory: the genome of Halobacterium salinarum strain R1 compared to that of strain NRC-1.</title>
        <authorList>
            <person name="Pfeiffer F."/>
            <person name="Schuster S.C."/>
            <person name="Broicher A."/>
            <person name="Falb M."/>
            <person name="Palm P."/>
            <person name="Rodewald K."/>
            <person name="Ruepp A."/>
            <person name="Soppa J."/>
            <person name="Tittor J."/>
            <person name="Oesterhelt D."/>
        </authorList>
    </citation>
    <scope>NUCLEOTIDE SEQUENCE [LARGE SCALE GENOMIC DNA]</scope>
    <source>
        <strain>ATCC 29341 / DSM 671 / R1</strain>
    </source>
</reference>
<protein>
    <recommendedName>
        <fullName>Smc-like protein Sph2</fullName>
    </recommendedName>
</protein>
<organism>
    <name type="scientific">Halobacterium salinarum (strain ATCC 29341 / DSM 671 / R1)</name>
    <dbReference type="NCBI Taxonomy" id="478009"/>
    <lineage>
        <taxon>Archaea</taxon>
        <taxon>Methanobacteriati</taxon>
        <taxon>Methanobacteriota</taxon>
        <taxon>Stenosarchaea group</taxon>
        <taxon>Halobacteria</taxon>
        <taxon>Halobacteriales</taxon>
        <taxon>Halobacteriaceae</taxon>
        <taxon>Halobacterium</taxon>
        <taxon>Halobacterium salinarum NRC-34001</taxon>
    </lineage>
</organism>
<comment type="function">
    <text evidence="1">May play a role in replication.</text>
</comment>
<comment type="subcellular location">
    <subcellularLocation>
        <location evidence="1">Cytoplasm</location>
    </subcellularLocation>
</comment>
<comment type="similarity">
    <text evidence="3">Belongs to the Sph1/Sph2 family.</text>
</comment>
<accession>B0R9L6</accession>
<gene>
    <name type="primary">sph2</name>
    <name type="ordered locus">OE_5049F</name>
</gene>
<feature type="chain" id="PRO_0000409228" description="Smc-like protein Sph2">
    <location>
        <begin position="1"/>
        <end position="667"/>
    </location>
</feature>
<feature type="coiled-coil region" evidence="2">
    <location>
        <begin position="153"/>
        <end position="295"/>
    </location>
</feature>
<feature type="coiled-coil region" evidence="2">
    <location>
        <begin position="355"/>
        <end position="517"/>
    </location>
</feature>
<keyword id="KW-0175">Coiled coil</keyword>
<keyword id="KW-0963">Cytoplasm</keyword>
<keyword id="KW-0614">Plasmid</keyword>